<name>RPOA_STUS1</name>
<accession>A4VHQ5</accession>
<keyword id="KW-0240">DNA-directed RNA polymerase</keyword>
<keyword id="KW-0548">Nucleotidyltransferase</keyword>
<keyword id="KW-1185">Reference proteome</keyword>
<keyword id="KW-0804">Transcription</keyword>
<keyword id="KW-0808">Transferase</keyword>
<sequence length="333" mass="36529">MQSSVNEFLTPRHIDVQVVSPTRAKITLEPLERGFGHTLGNALRRILLSSMPGCAVVEAEIDGVLHEYSAIEGVQEDVIEILLNLKGIAIKLHGRDEVTLSLVKKGAGAVTAADIQLDHDVEIVNGDHLIANLAANGSLNMKLKVARGRGYEPADARQSDEDESRSIGRLQLDATFSPVRRVAYVVENARVEQRTNLDKLVIDLETNGTLDPEEAIRRAATILQQQLAAFVDLKGDSEPVVVEQEDEIDPILLRPVDDLELTVRSANCLKAENIYYIGDLIQRTEVELLKTPNLGKKSLTEIKDVLASRGLSLGMRLDNWPPASLKKDDKATA</sequence>
<protein>
    <recommendedName>
        <fullName evidence="1">DNA-directed RNA polymerase subunit alpha</fullName>
        <shortName evidence="1">RNAP subunit alpha</shortName>
        <ecNumber evidence="1">2.7.7.6</ecNumber>
    </recommendedName>
    <alternativeName>
        <fullName evidence="1">RNA polymerase subunit alpha</fullName>
    </alternativeName>
    <alternativeName>
        <fullName evidence="1">Transcriptase subunit alpha</fullName>
    </alternativeName>
</protein>
<dbReference type="EC" id="2.7.7.6" evidence="1"/>
<dbReference type="EMBL" id="CP000304">
    <property type="protein sequence ID" value="ABP78506.1"/>
    <property type="molecule type" value="Genomic_DNA"/>
</dbReference>
<dbReference type="RefSeq" id="WP_003293045.1">
    <property type="nucleotide sequence ID" value="NC_009434.1"/>
</dbReference>
<dbReference type="SMR" id="A4VHQ5"/>
<dbReference type="GeneID" id="75213410"/>
<dbReference type="KEGG" id="psa:PST_0809"/>
<dbReference type="eggNOG" id="COG0202">
    <property type="taxonomic scope" value="Bacteria"/>
</dbReference>
<dbReference type="HOGENOM" id="CLU_053084_0_0_6"/>
<dbReference type="Proteomes" id="UP000000233">
    <property type="component" value="Chromosome"/>
</dbReference>
<dbReference type="GO" id="GO:0005737">
    <property type="term" value="C:cytoplasm"/>
    <property type="evidence" value="ECO:0007669"/>
    <property type="project" value="UniProtKB-ARBA"/>
</dbReference>
<dbReference type="GO" id="GO:0000428">
    <property type="term" value="C:DNA-directed RNA polymerase complex"/>
    <property type="evidence" value="ECO:0007669"/>
    <property type="project" value="UniProtKB-KW"/>
</dbReference>
<dbReference type="GO" id="GO:0003677">
    <property type="term" value="F:DNA binding"/>
    <property type="evidence" value="ECO:0007669"/>
    <property type="project" value="UniProtKB-UniRule"/>
</dbReference>
<dbReference type="GO" id="GO:0003899">
    <property type="term" value="F:DNA-directed RNA polymerase activity"/>
    <property type="evidence" value="ECO:0007669"/>
    <property type="project" value="UniProtKB-UniRule"/>
</dbReference>
<dbReference type="GO" id="GO:0046983">
    <property type="term" value="F:protein dimerization activity"/>
    <property type="evidence" value="ECO:0007669"/>
    <property type="project" value="InterPro"/>
</dbReference>
<dbReference type="GO" id="GO:0006351">
    <property type="term" value="P:DNA-templated transcription"/>
    <property type="evidence" value="ECO:0007669"/>
    <property type="project" value="UniProtKB-UniRule"/>
</dbReference>
<dbReference type="CDD" id="cd06928">
    <property type="entry name" value="RNAP_alpha_NTD"/>
    <property type="match status" value="1"/>
</dbReference>
<dbReference type="FunFam" id="1.10.150.20:FF:000001">
    <property type="entry name" value="DNA-directed RNA polymerase subunit alpha"/>
    <property type="match status" value="1"/>
</dbReference>
<dbReference type="FunFam" id="2.170.120.12:FF:000001">
    <property type="entry name" value="DNA-directed RNA polymerase subunit alpha"/>
    <property type="match status" value="1"/>
</dbReference>
<dbReference type="Gene3D" id="1.10.150.20">
    <property type="entry name" value="5' to 3' exonuclease, C-terminal subdomain"/>
    <property type="match status" value="1"/>
</dbReference>
<dbReference type="Gene3D" id="2.170.120.12">
    <property type="entry name" value="DNA-directed RNA polymerase, insert domain"/>
    <property type="match status" value="1"/>
</dbReference>
<dbReference type="Gene3D" id="3.30.1360.10">
    <property type="entry name" value="RNA polymerase, RBP11-like subunit"/>
    <property type="match status" value="1"/>
</dbReference>
<dbReference type="HAMAP" id="MF_00059">
    <property type="entry name" value="RNApol_bact_RpoA"/>
    <property type="match status" value="1"/>
</dbReference>
<dbReference type="InterPro" id="IPR011262">
    <property type="entry name" value="DNA-dir_RNA_pol_insert"/>
</dbReference>
<dbReference type="InterPro" id="IPR011263">
    <property type="entry name" value="DNA-dir_RNA_pol_RpoA/D/Rpb3"/>
</dbReference>
<dbReference type="InterPro" id="IPR011773">
    <property type="entry name" value="DNA-dir_RpoA"/>
</dbReference>
<dbReference type="InterPro" id="IPR036603">
    <property type="entry name" value="RBP11-like"/>
</dbReference>
<dbReference type="InterPro" id="IPR011260">
    <property type="entry name" value="RNAP_asu_C"/>
</dbReference>
<dbReference type="InterPro" id="IPR036643">
    <property type="entry name" value="RNApol_insert_sf"/>
</dbReference>
<dbReference type="NCBIfam" id="NF003513">
    <property type="entry name" value="PRK05182.1-2"/>
    <property type="match status" value="1"/>
</dbReference>
<dbReference type="NCBIfam" id="NF003519">
    <property type="entry name" value="PRK05182.2-5"/>
    <property type="match status" value="1"/>
</dbReference>
<dbReference type="NCBIfam" id="TIGR02027">
    <property type="entry name" value="rpoA"/>
    <property type="match status" value="1"/>
</dbReference>
<dbReference type="Pfam" id="PF01000">
    <property type="entry name" value="RNA_pol_A_bac"/>
    <property type="match status" value="1"/>
</dbReference>
<dbReference type="Pfam" id="PF03118">
    <property type="entry name" value="RNA_pol_A_CTD"/>
    <property type="match status" value="1"/>
</dbReference>
<dbReference type="Pfam" id="PF01193">
    <property type="entry name" value="RNA_pol_L"/>
    <property type="match status" value="1"/>
</dbReference>
<dbReference type="SMART" id="SM00662">
    <property type="entry name" value="RPOLD"/>
    <property type="match status" value="1"/>
</dbReference>
<dbReference type="SUPFAM" id="SSF47789">
    <property type="entry name" value="C-terminal domain of RNA polymerase alpha subunit"/>
    <property type="match status" value="1"/>
</dbReference>
<dbReference type="SUPFAM" id="SSF56553">
    <property type="entry name" value="Insert subdomain of RNA polymerase alpha subunit"/>
    <property type="match status" value="1"/>
</dbReference>
<dbReference type="SUPFAM" id="SSF55257">
    <property type="entry name" value="RBP11-like subunits of RNA polymerase"/>
    <property type="match status" value="1"/>
</dbReference>
<reference key="1">
    <citation type="journal article" date="2008" name="Proc. Natl. Acad. Sci. U.S.A.">
        <title>Nitrogen fixation island and rhizosphere competence traits in the genome of root-associated Pseudomonas stutzeri A1501.</title>
        <authorList>
            <person name="Yan Y."/>
            <person name="Yang J."/>
            <person name="Dou Y."/>
            <person name="Chen M."/>
            <person name="Ping S."/>
            <person name="Peng J."/>
            <person name="Lu W."/>
            <person name="Zhang W."/>
            <person name="Yao Z."/>
            <person name="Li H."/>
            <person name="Liu W."/>
            <person name="He S."/>
            <person name="Geng L."/>
            <person name="Zhang X."/>
            <person name="Yang F."/>
            <person name="Yu H."/>
            <person name="Zhan Y."/>
            <person name="Li D."/>
            <person name="Lin Z."/>
            <person name="Wang Y."/>
            <person name="Elmerich C."/>
            <person name="Lin M."/>
            <person name="Jin Q."/>
        </authorList>
    </citation>
    <scope>NUCLEOTIDE SEQUENCE [LARGE SCALE GENOMIC DNA]</scope>
    <source>
        <strain>A1501</strain>
    </source>
</reference>
<feature type="chain" id="PRO_0000296857" description="DNA-directed RNA polymerase subunit alpha">
    <location>
        <begin position="1"/>
        <end position="333"/>
    </location>
</feature>
<feature type="region of interest" description="Alpha N-terminal domain (alpha-NTD)" evidence="1">
    <location>
        <begin position="1"/>
        <end position="234"/>
    </location>
</feature>
<feature type="region of interest" description="Alpha C-terminal domain (alpha-CTD)" evidence="1">
    <location>
        <begin position="248"/>
        <end position="333"/>
    </location>
</feature>
<comment type="function">
    <text evidence="1">DNA-dependent RNA polymerase catalyzes the transcription of DNA into RNA using the four ribonucleoside triphosphates as substrates.</text>
</comment>
<comment type="catalytic activity">
    <reaction evidence="1">
        <text>RNA(n) + a ribonucleoside 5'-triphosphate = RNA(n+1) + diphosphate</text>
        <dbReference type="Rhea" id="RHEA:21248"/>
        <dbReference type="Rhea" id="RHEA-COMP:14527"/>
        <dbReference type="Rhea" id="RHEA-COMP:17342"/>
        <dbReference type="ChEBI" id="CHEBI:33019"/>
        <dbReference type="ChEBI" id="CHEBI:61557"/>
        <dbReference type="ChEBI" id="CHEBI:140395"/>
        <dbReference type="EC" id="2.7.7.6"/>
    </reaction>
</comment>
<comment type="subunit">
    <text evidence="1">Homodimer. The RNAP catalytic core consists of 2 alpha, 1 beta, 1 beta' and 1 omega subunit. When a sigma factor is associated with the core the holoenzyme is formed, which can initiate transcription.</text>
</comment>
<comment type="domain">
    <text evidence="1">The N-terminal domain is essential for RNAP assembly and basal transcription, whereas the C-terminal domain is involved in interaction with transcriptional regulators and with upstream promoter elements.</text>
</comment>
<comment type="similarity">
    <text evidence="1">Belongs to the RNA polymerase alpha chain family.</text>
</comment>
<gene>
    <name evidence="1" type="primary">rpoA</name>
    <name type="ordered locus">PST_0809</name>
</gene>
<organism>
    <name type="scientific">Stutzerimonas stutzeri (strain A1501)</name>
    <name type="common">Pseudomonas stutzeri</name>
    <dbReference type="NCBI Taxonomy" id="379731"/>
    <lineage>
        <taxon>Bacteria</taxon>
        <taxon>Pseudomonadati</taxon>
        <taxon>Pseudomonadota</taxon>
        <taxon>Gammaproteobacteria</taxon>
        <taxon>Pseudomonadales</taxon>
        <taxon>Pseudomonadaceae</taxon>
        <taxon>Stutzerimonas</taxon>
    </lineage>
</organism>
<evidence type="ECO:0000255" key="1">
    <source>
        <dbReference type="HAMAP-Rule" id="MF_00059"/>
    </source>
</evidence>
<proteinExistence type="inferred from homology"/>